<comment type="function">
    <text evidence="1">The alpha subunit is responsible for the aldol cleavage of indoleglycerol phosphate to indole and glyceraldehyde 3-phosphate.</text>
</comment>
<comment type="catalytic activity">
    <reaction evidence="1">
        <text>(1S,2R)-1-C-(indol-3-yl)glycerol 3-phosphate + L-serine = D-glyceraldehyde 3-phosphate + L-tryptophan + H2O</text>
        <dbReference type="Rhea" id="RHEA:10532"/>
        <dbReference type="ChEBI" id="CHEBI:15377"/>
        <dbReference type="ChEBI" id="CHEBI:33384"/>
        <dbReference type="ChEBI" id="CHEBI:57912"/>
        <dbReference type="ChEBI" id="CHEBI:58866"/>
        <dbReference type="ChEBI" id="CHEBI:59776"/>
        <dbReference type="EC" id="4.2.1.20"/>
    </reaction>
</comment>
<comment type="pathway">
    <text evidence="1">Amino-acid biosynthesis; L-tryptophan biosynthesis; L-tryptophan from chorismate: step 5/5.</text>
</comment>
<comment type="subunit">
    <text evidence="1">Tetramer of two alpha and two beta chains.</text>
</comment>
<comment type="similarity">
    <text evidence="1">Belongs to the TrpA family.</text>
</comment>
<evidence type="ECO:0000255" key="1">
    <source>
        <dbReference type="HAMAP-Rule" id="MF_00131"/>
    </source>
</evidence>
<dbReference type="EC" id="4.2.1.20" evidence="1"/>
<dbReference type="EMBL" id="CP000783">
    <property type="protein sequence ID" value="ABU76812.1"/>
    <property type="molecule type" value="Genomic_DNA"/>
</dbReference>
<dbReference type="RefSeq" id="WP_004385016.1">
    <property type="nucleotide sequence ID" value="NC_009778.1"/>
</dbReference>
<dbReference type="SMR" id="A7MMG7"/>
<dbReference type="GeneID" id="56730416"/>
<dbReference type="KEGG" id="esa:ESA_01558"/>
<dbReference type="HOGENOM" id="CLU_016734_0_4_6"/>
<dbReference type="UniPathway" id="UPA00035">
    <property type="reaction ID" value="UER00044"/>
</dbReference>
<dbReference type="Proteomes" id="UP000000260">
    <property type="component" value="Chromosome"/>
</dbReference>
<dbReference type="GO" id="GO:0005829">
    <property type="term" value="C:cytosol"/>
    <property type="evidence" value="ECO:0007669"/>
    <property type="project" value="TreeGrafter"/>
</dbReference>
<dbReference type="GO" id="GO:0004834">
    <property type="term" value="F:tryptophan synthase activity"/>
    <property type="evidence" value="ECO:0007669"/>
    <property type="project" value="UniProtKB-UniRule"/>
</dbReference>
<dbReference type="CDD" id="cd04724">
    <property type="entry name" value="Tryptophan_synthase_alpha"/>
    <property type="match status" value="1"/>
</dbReference>
<dbReference type="FunFam" id="3.20.20.70:FF:000037">
    <property type="entry name" value="Tryptophan synthase alpha chain"/>
    <property type="match status" value="1"/>
</dbReference>
<dbReference type="Gene3D" id="3.20.20.70">
    <property type="entry name" value="Aldolase class I"/>
    <property type="match status" value="1"/>
</dbReference>
<dbReference type="HAMAP" id="MF_00131">
    <property type="entry name" value="Trp_synth_alpha"/>
    <property type="match status" value="1"/>
</dbReference>
<dbReference type="InterPro" id="IPR013785">
    <property type="entry name" value="Aldolase_TIM"/>
</dbReference>
<dbReference type="InterPro" id="IPR011060">
    <property type="entry name" value="RibuloseP-bd_barrel"/>
</dbReference>
<dbReference type="InterPro" id="IPR018204">
    <property type="entry name" value="Trp_synthase_alpha_AS"/>
</dbReference>
<dbReference type="InterPro" id="IPR002028">
    <property type="entry name" value="Trp_synthase_suA"/>
</dbReference>
<dbReference type="NCBIfam" id="TIGR00262">
    <property type="entry name" value="trpA"/>
    <property type="match status" value="1"/>
</dbReference>
<dbReference type="PANTHER" id="PTHR43406:SF1">
    <property type="entry name" value="TRYPTOPHAN SYNTHASE ALPHA CHAIN, CHLOROPLASTIC"/>
    <property type="match status" value="1"/>
</dbReference>
<dbReference type="PANTHER" id="PTHR43406">
    <property type="entry name" value="TRYPTOPHAN SYNTHASE, ALPHA CHAIN"/>
    <property type="match status" value="1"/>
</dbReference>
<dbReference type="Pfam" id="PF00290">
    <property type="entry name" value="Trp_syntA"/>
    <property type="match status" value="1"/>
</dbReference>
<dbReference type="SUPFAM" id="SSF51366">
    <property type="entry name" value="Ribulose-phoshate binding barrel"/>
    <property type="match status" value="1"/>
</dbReference>
<dbReference type="PROSITE" id="PS00167">
    <property type="entry name" value="TRP_SYNTHASE_ALPHA"/>
    <property type="match status" value="1"/>
</dbReference>
<feature type="chain" id="PRO_1000018199" description="Tryptophan synthase alpha chain">
    <location>
        <begin position="1"/>
        <end position="269"/>
    </location>
</feature>
<feature type="active site" description="Proton acceptor" evidence="1">
    <location>
        <position position="49"/>
    </location>
</feature>
<feature type="active site" description="Proton acceptor" evidence="1">
    <location>
        <position position="60"/>
    </location>
</feature>
<keyword id="KW-0028">Amino-acid biosynthesis</keyword>
<keyword id="KW-0057">Aromatic amino acid biosynthesis</keyword>
<keyword id="KW-0456">Lyase</keyword>
<keyword id="KW-1185">Reference proteome</keyword>
<keyword id="KW-0822">Tryptophan biosynthesis</keyword>
<proteinExistence type="inferred from homology"/>
<accession>A7MMG7</accession>
<reference key="1">
    <citation type="journal article" date="2010" name="PLoS ONE">
        <title>Genome sequence of Cronobacter sakazakii BAA-894 and comparative genomic hybridization analysis with other Cronobacter species.</title>
        <authorList>
            <person name="Kucerova E."/>
            <person name="Clifton S.W."/>
            <person name="Xia X.Q."/>
            <person name="Long F."/>
            <person name="Porwollik S."/>
            <person name="Fulton L."/>
            <person name="Fronick C."/>
            <person name="Minx P."/>
            <person name="Kyung K."/>
            <person name="Warren W."/>
            <person name="Fulton R."/>
            <person name="Feng D."/>
            <person name="Wollam A."/>
            <person name="Shah N."/>
            <person name="Bhonagiri V."/>
            <person name="Nash W.E."/>
            <person name="Hallsworth-Pepin K."/>
            <person name="Wilson R.K."/>
            <person name="McClelland M."/>
            <person name="Forsythe S.J."/>
        </authorList>
    </citation>
    <scope>NUCLEOTIDE SEQUENCE [LARGE SCALE GENOMIC DNA]</scope>
    <source>
        <strain>ATCC BAA-894</strain>
    </source>
</reference>
<gene>
    <name evidence="1" type="primary">trpA</name>
    <name type="ordered locus">ESA_01558</name>
</gene>
<sequence length="269" mass="28729">MERYQQLFDRLAARKEGAFVPFVTLGDPSPEQSLQIIDALVEGGADALELGIPFSDPLADGPTIQSATLRAFASGTTPDQCFEMLAAVRQKYPDLPIGLLMYANLVFSRGVDEFYARCAAVGVDSVLVADVPVEESAPFRQAAMRHNVAPIFICPPNADDDLLRQIASYGRGYTYLLSRAGVTGAENRAALPLNHLINKLTEYHAAPPLQGFGISEPAQVKAAIEAGAAGAISGSAIVKIIENNLNDRAAMLESLKTFVRQLKAASLPA</sequence>
<organism>
    <name type="scientific">Cronobacter sakazakii (strain ATCC BAA-894)</name>
    <name type="common">Enterobacter sakazakii</name>
    <dbReference type="NCBI Taxonomy" id="290339"/>
    <lineage>
        <taxon>Bacteria</taxon>
        <taxon>Pseudomonadati</taxon>
        <taxon>Pseudomonadota</taxon>
        <taxon>Gammaproteobacteria</taxon>
        <taxon>Enterobacterales</taxon>
        <taxon>Enterobacteriaceae</taxon>
        <taxon>Cronobacter</taxon>
    </lineage>
</organism>
<name>TRPA_CROS8</name>
<protein>
    <recommendedName>
        <fullName evidence="1">Tryptophan synthase alpha chain</fullName>
        <ecNumber evidence="1">4.2.1.20</ecNumber>
    </recommendedName>
</protein>